<evidence type="ECO:0000255" key="1">
    <source>
        <dbReference type="HAMAP-Rule" id="MF_00248"/>
    </source>
</evidence>
<accession>A5VEJ8</accession>
<sequence>MSELPKWHGTTILSVRKGGKVVVIGDGQVSMGNTVMKPNARKVRKLGDGSVIGGFAGATADAFTLFDRLERKLEQHGGQLLRAAVELAKDWRTDKYLRNLEAMMIVADREVTLILTGNGDVLEPVGGVAAIGSGGNFALSAARALVDYEADAETICRKAMAIAADLCVFTNDSLTIETLDSAA</sequence>
<organism>
    <name type="scientific">Rhizorhabdus wittichii (strain DSM 6014 / CCUG 31198 / JCM 15750 / NBRC 105917 / EY 4224 / RW1)</name>
    <name type="common">Sphingomonas wittichii</name>
    <dbReference type="NCBI Taxonomy" id="392499"/>
    <lineage>
        <taxon>Bacteria</taxon>
        <taxon>Pseudomonadati</taxon>
        <taxon>Pseudomonadota</taxon>
        <taxon>Alphaproteobacteria</taxon>
        <taxon>Sphingomonadales</taxon>
        <taxon>Sphingomonadaceae</taxon>
        <taxon>Rhizorhabdus</taxon>
    </lineage>
</organism>
<feature type="chain" id="PRO_0000336797" description="ATP-dependent protease subunit HslV">
    <location>
        <begin position="1"/>
        <end position="183"/>
    </location>
</feature>
<feature type="active site" evidence="1">
    <location>
        <position position="10"/>
    </location>
</feature>
<feature type="binding site" evidence="1">
    <location>
        <position position="164"/>
    </location>
    <ligand>
        <name>Na(+)</name>
        <dbReference type="ChEBI" id="CHEBI:29101"/>
    </ligand>
</feature>
<feature type="binding site" evidence="1">
    <location>
        <position position="167"/>
    </location>
    <ligand>
        <name>Na(+)</name>
        <dbReference type="ChEBI" id="CHEBI:29101"/>
    </ligand>
</feature>
<feature type="binding site" evidence="1">
    <location>
        <position position="170"/>
    </location>
    <ligand>
        <name>Na(+)</name>
        <dbReference type="ChEBI" id="CHEBI:29101"/>
    </ligand>
</feature>
<protein>
    <recommendedName>
        <fullName evidence="1">ATP-dependent protease subunit HslV</fullName>
        <ecNumber evidence="1">3.4.25.2</ecNumber>
    </recommendedName>
</protein>
<gene>
    <name evidence="1" type="primary">hslV</name>
    <name type="ordered locus">Swit_4376</name>
</gene>
<reference key="1">
    <citation type="journal article" date="2010" name="J. Bacteriol.">
        <title>Genome sequence of the dioxin-mineralizing bacterium Sphingomonas wittichii RW1.</title>
        <authorList>
            <person name="Miller T.R."/>
            <person name="Delcher A.L."/>
            <person name="Salzberg S.L."/>
            <person name="Saunders E."/>
            <person name="Detter J.C."/>
            <person name="Halden R.U."/>
        </authorList>
    </citation>
    <scope>NUCLEOTIDE SEQUENCE [LARGE SCALE GENOMIC DNA]</scope>
    <source>
        <strain>DSM 6014 / CCUG 31198 / JCM 15750 / NBRC 105917 / EY 4224 / RW1</strain>
    </source>
</reference>
<keyword id="KW-0021">Allosteric enzyme</keyword>
<keyword id="KW-0963">Cytoplasm</keyword>
<keyword id="KW-0378">Hydrolase</keyword>
<keyword id="KW-0479">Metal-binding</keyword>
<keyword id="KW-0645">Protease</keyword>
<keyword id="KW-1185">Reference proteome</keyword>
<keyword id="KW-0915">Sodium</keyword>
<keyword id="KW-0888">Threonine protease</keyword>
<proteinExistence type="inferred from homology"/>
<name>HSLV_RHIWR</name>
<dbReference type="EC" id="3.4.25.2" evidence="1"/>
<dbReference type="EMBL" id="CP000699">
    <property type="protein sequence ID" value="ABQ70714.1"/>
    <property type="molecule type" value="Genomic_DNA"/>
</dbReference>
<dbReference type="SMR" id="A5VEJ8"/>
<dbReference type="STRING" id="392499.Swit_4376"/>
<dbReference type="MEROPS" id="T01.006"/>
<dbReference type="PaxDb" id="392499-Swit_4376"/>
<dbReference type="KEGG" id="swi:Swit_4376"/>
<dbReference type="eggNOG" id="COG5405">
    <property type="taxonomic scope" value="Bacteria"/>
</dbReference>
<dbReference type="HOGENOM" id="CLU_093872_1_0_5"/>
<dbReference type="OrthoDB" id="9804884at2"/>
<dbReference type="Proteomes" id="UP000001989">
    <property type="component" value="Chromosome"/>
</dbReference>
<dbReference type="GO" id="GO:0009376">
    <property type="term" value="C:HslUV protease complex"/>
    <property type="evidence" value="ECO:0007669"/>
    <property type="project" value="UniProtKB-UniRule"/>
</dbReference>
<dbReference type="GO" id="GO:0005839">
    <property type="term" value="C:proteasome core complex"/>
    <property type="evidence" value="ECO:0007669"/>
    <property type="project" value="InterPro"/>
</dbReference>
<dbReference type="GO" id="GO:0046872">
    <property type="term" value="F:metal ion binding"/>
    <property type="evidence" value="ECO:0007669"/>
    <property type="project" value="UniProtKB-KW"/>
</dbReference>
<dbReference type="GO" id="GO:0004298">
    <property type="term" value="F:threonine-type endopeptidase activity"/>
    <property type="evidence" value="ECO:0007669"/>
    <property type="project" value="UniProtKB-KW"/>
</dbReference>
<dbReference type="GO" id="GO:0051603">
    <property type="term" value="P:proteolysis involved in protein catabolic process"/>
    <property type="evidence" value="ECO:0007669"/>
    <property type="project" value="InterPro"/>
</dbReference>
<dbReference type="CDD" id="cd01913">
    <property type="entry name" value="protease_HslV"/>
    <property type="match status" value="1"/>
</dbReference>
<dbReference type="Gene3D" id="3.60.20.10">
    <property type="entry name" value="Glutamine Phosphoribosylpyrophosphate, subunit 1, domain 1"/>
    <property type="match status" value="1"/>
</dbReference>
<dbReference type="HAMAP" id="MF_00248">
    <property type="entry name" value="HslV"/>
    <property type="match status" value="1"/>
</dbReference>
<dbReference type="InterPro" id="IPR022281">
    <property type="entry name" value="ATP-dep_Prtase_HsIV_su"/>
</dbReference>
<dbReference type="InterPro" id="IPR029055">
    <property type="entry name" value="Ntn_hydrolases_N"/>
</dbReference>
<dbReference type="InterPro" id="IPR001353">
    <property type="entry name" value="Proteasome_sua/b"/>
</dbReference>
<dbReference type="InterPro" id="IPR023333">
    <property type="entry name" value="Proteasome_suB-type"/>
</dbReference>
<dbReference type="NCBIfam" id="TIGR03692">
    <property type="entry name" value="ATP_dep_HslV"/>
    <property type="match status" value="1"/>
</dbReference>
<dbReference type="NCBIfam" id="NF003964">
    <property type="entry name" value="PRK05456.1"/>
    <property type="match status" value="1"/>
</dbReference>
<dbReference type="PANTHER" id="PTHR32194:SF7">
    <property type="entry name" value="ATP-DEPENDENT PROTEASE SUBUNIT HSLV"/>
    <property type="match status" value="1"/>
</dbReference>
<dbReference type="PANTHER" id="PTHR32194">
    <property type="entry name" value="METALLOPROTEASE TLDD"/>
    <property type="match status" value="1"/>
</dbReference>
<dbReference type="Pfam" id="PF00227">
    <property type="entry name" value="Proteasome"/>
    <property type="match status" value="1"/>
</dbReference>
<dbReference type="PIRSF" id="PIRSF039093">
    <property type="entry name" value="HslV"/>
    <property type="match status" value="1"/>
</dbReference>
<dbReference type="SUPFAM" id="SSF56235">
    <property type="entry name" value="N-terminal nucleophile aminohydrolases (Ntn hydrolases)"/>
    <property type="match status" value="1"/>
</dbReference>
<dbReference type="PROSITE" id="PS51476">
    <property type="entry name" value="PROTEASOME_BETA_2"/>
    <property type="match status" value="1"/>
</dbReference>
<comment type="function">
    <text evidence="1">Protease subunit of a proteasome-like degradation complex believed to be a general protein degrading machinery.</text>
</comment>
<comment type="catalytic activity">
    <reaction evidence="1">
        <text>ATP-dependent cleavage of peptide bonds with broad specificity.</text>
        <dbReference type="EC" id="3.4.25.2"/>
    </reaction>
</comment>
<comment type="activity regulation">
    <text evidence="1">Allosterically activated by HslU binding.</text>
</comment>
<comment type="subunit">
    <text evidence="1">A double ring-shaped homohexamer of HslV is capped on each side by a ring-shaped HslU homohexamer. The assembly of the HslU/HslV complex is dependent on binding of ATP.</text>
</comment>
<comment type="subcellular location">
    <subcellularLocation>
        <location evidence="1">Cytoplasm</location>
    </subcellularLocation>
</comment>
<comment type="similarity">
    <text evidence="1">Belongs to the peptidase T1B family. HslV subfamily.</text>
</comment>